<proteinExistence type="inferred from homology"/>
<name>Y718_FLAPJ</name>
<reference key="1">
    <citation type="journal article" date="2007" name="Nat. Biotechnol.">
        <title>Complete genome sequence of the fish pathogen Flavobacterium psychrophilum.</title>
        <authorList>
            <person name="Duchaud E."/>
            <person name="Boussaha M."/>
            <person name="Loux V."/>
            <person name="Bernardet J.-F."/>
            <person name="Michel C."/>
            <person name="Kerouault B."/>
            <person name="Mondot S."/>
            <person name="Nicolas P."/>
            <person name="Bossy R."/>
            <person name="Caron C."/>
            <person name="Bessieres P."/>
            <person name="Gibrat J.-F."/>
            <person name="Claverol S."/>
            <person name="Dumetz F."/>
            <person name="Le Henaff M."/>
            <person name="Benmansour A."/>
        </authorList>
    </citation>
    <scope>NUCLEOTIDE SEQUENCE [LARGE SCALE GENOMIC DNA]</scope>
    <source>
        <strain>ATCC 49511 / DSM 21280 / CIP 103535 / JIP02/86</strain>
    </source>
</reference>
<keyword id="KW-1185">Reference proteome</keyword>
<gene>
    <name type="ordered locus">FP0718</name>
</gene>
<protein>
    <recommendedName>
        <fullName evidence="1">UPF0246 protein FP0718</fullName>
    </recommendedName>
</protein>
<dbReference type="EMBL" id="AM398681">
    <property type="protein sequence ID" value="CAL42821.1"/>
    <property type="molecule type" value="Genomic_DNA"/>
</dbReference>
<dbReference type="RefSeq" id="YP_001295637.1">
    <property type="nucleotide sequence ID" value="NC_009613.3"/>
</dbReference>
<dbReference type="SMR" id="A6GXJ8"/>
<dbReference type="EnsemblBacteria" id="CAL42821">
    <property type="protein sequence ID" value="CAL42821"/>
    <property type="gene ID" value="FP0718"/>
</dbReference>
<dbReference type="KEGG" id="fps:FP0718"/>
<dbReference type="PATRIC" id="fig|402612.5.peg.736"/>
<dbReference type="eggNOG" id="COG3022">
    <property type="taxonomic scope" value="Bacteria"/>
</dbReference>
<dbReference type="HOGENOM" id="CLU_061989_0_0_10"/>
<dbReference type="OrthoDB" id="9777133at2"/>
<dbReference type="Proteomes" id="UP000006394">
    <property type="component" value="Chromosome"/>
</dbReference>
<dbReference type="GO" id="GO:0005829">
    <property type="term" value="C:cytosol"/>
    <property type="evidence" value="ECO:0007669"/>
    <property type="project" value="TreeGrafter"/>
</dbReference>
<dbReference type="GO" id="GO:0033194">
    <property type="term" value="P:response to hydroperoxide"/>
    <property type="evidence" value="ECO:0007669"/>
    <property type="project" value="TreeGrafter"/>
</dbReference>
<dbReference type="HAMAP" id="MF_00652">
    <property type="entry name" value="UPF0246"/>
    <property type="match status" value="1"/>
</dbReference>
<dbReference type="InterPro" id="IPR005583">
    <property type="entry name" value="YaaA"/>
</dbReference>
<dbReference type="NCBIfam" id="NF002542">
    <property type="entry name" value="PRK02101.1-3"/>
    <property type="match status" value="1"/>
</dbReference>
<dbReference type="PANTHER" id="PTHR30283:SF4">
    <property type="entry name" value="PEROXIDE STRESS RESISTANCE PROTEIN YAAA"/>
    <property type="match status" value="1"/>
</dbReference>
<dbReference type="PANTHER" id="PTHR30283">
    <property type="entry name" value="PEROXIDE STRESS RESPONSE PROTEIN YAAA"/>
    <property type="match status" value="1"/>
</dbReference>
<dbReference type="Pfam" id="PF03883">
    <property type="entry name" value="H2O2_YaaD"/>
    <property type="match status" value="1"/>
</dbReference>
<evidence type="ECO:0000255" key="1">
    <source>
        <dbReference type="HAMAP-Rule" id="MF_00652"/>
    </source>
</evidence>
<organism>
    <name type="scientific">Flavobacterium psychrophilum (strain ATCC 49511 / DSM 21280 / CIP 103535 / JIP02/86)</name>
    <dbReference type="NCBI Taxonomy" id="402612"/>
    <lineage>
        <taxon>Bacteria</taxon>
        <taxon>Pseudomonadati</taxon>
        <taxon>Bacteroidota</taxon>
        <taxon>Flavobacteriia</taxon>
        <taxon>Flavobacteriales</taxon>
        <taxon>Flavobacteriaceae</taxon>
        <taxon>Flavobacterium</taxon>
    </lineage>
</organism>
<sequence>MKIVISPAKSLDFEKTLPNNQFTKPAYLKQSKEIVSVLNKLNPKELSELMHISDNLAQLNWQRNKNFTTPFTTQNARPAIYTFNGEVYNGLDSYSIAEEKLAVLQNKLRILSGQYGILKPLDLMQAYRLEMGTHLPINEHKNLYSFWKEIVTNDLNKELKNNELFVNLASNEYFSVIDTKKLKVPIITPEFKDYKDEKLKIISFFAKKARGLMVRYIIDNDIETLDGLKGFNYEGYSFDANLSKGNTLVFTR</sequence>
<comment type="similarity">
    <text evidence="1">Belongs to the UPF0246 family.</text>
</comment>
<feature type="chain" id="PRO_1000061602" description="UPF0246 protein FP0718">
    <location>
        <begin position="1"/>
        <end position="252"/>
    </location>
</feature>
<accession>A6GXJ8</accession>